<reference key="1">
    <citation type="journal article" date="2008" name="J. Bacteriol.">
        <title>The pangenome structure of Escherichia coli: comparative genomic analysis of E. coli commensal and pathogenic isolates.</title>
        <authorList>
            <person name="Rasko D.A."/>
            <person name="Rosovitz M.J."/>
            <person name="Myers G.S.A."/>
            <person name="Mongodin E.F."/>
            <person name="Fricke W.F."/>
            <person name="Gajer P."/>
            <person name="Crabtree J."/>
            <person name="Sebaihia M."/>
            <person name="Thomson N.R."/>
            <person name="Chaudhuri R."/>
            <person name="Henderson I.R."/>
            <person name="Sperandio V."/>
            <person name="Ravel J."/>
        </authorList>
    </citation>
    <scope>NUCLEOTIDE SEQUENCE [LARGE SCALE GENOMIC DNA]</scope>
    <source>
        <strain>E24377A / ETEC</strain>
    </source>
</reference>
<sequence length="548" mass="57329">MAAKDVKFGNDARVKMLRGVNVLADAVKVTLGPKGRNVVLDKSFGAPTITKDGVSVAREIELEDKFENMGAQMVKEVASKANDAAGDGTTTATVLAQAIITEGLKAVAAGMNPMDLKRGIDKAVTAAVEELKALSVPCSDSKAIAQVGTISANSDETVGKLIAEAMDKVGKEGVITVEDGTGLQDELDVVEGMQFDRGYLSPYFINKPETGAVELESPFILLADKKISNIREMLPVLEAVAKAGKPLLIIAEDVEGEALATLVVNTMRGIVKVAAVKAPGFGDRRKAMLQDIATLTGGTVISEEIGMELEKATLEDLGQAKRVVINKDTTTIIDGVGEEAAIQGRVAQIRQQIEEATSDYDREKLQERVAKLAGGVAVIKVGAATEVEMKEKKARVEDALHATRAAVEEGVVAGGGVALIRVASKLADLRGQNEDQNVGIKVALRAMEAPLRQIVLNCGEEPSVVANTVKGGDGNYGYNAATEEYGNMIDMGILDPTKVTRSALQYAASVAGLMITTECMVTDLPKNDAADLGAAGGMGGMGGMGGMM</sequence>
<dbReference type="EC" id="5.6.1.7" evidence="1"/>
<dbReference type="EMBL" id="CP000800">
    <property type="protein sequence ID" value="ABV20837.1"/>
    <property type="molecule type" value="Genomic_DNA"/>
</dbReference>
<dbReference type="RefSeq" id="WP_000729117.1">
    <property type="nucleotide sequence ID" value="NC_009801.1"/>
</dbReference>
<dbReference type="BMRB" id="A7ZV12"/>
<dbReference type="SMR" id="A7ZV12"/>
<dbReference type="GeneID" id="93777681"/>
<dbReference type="KEGG" id="ecw:EcE24377A_4698"/>
<dbReference type="HOGENOM" id="CLU_016503_3_0_6"/>
<dbReference type="Proteomes" id="UP000001122">
    <property type="component" value="Chromosome"/>
</dbReference>
<dbReference type="GO" id="GO:0005737">
    <property type="term" value="C:cytoplasm"/>
    <property type="evidence" value="ECO:0007669"/>
    <property type="project" value="UniProtKB-SubCell"/>
</dbReference>
<dbReference type="GO" id="GO:0005524">
    <property type="term" value="F:ATP binding"/>
    <property type="evidence" value="ECO:0007669"/>
    <property type="project" value="UniProtKB-UniRule"/>
</dbReference>
<dbReference type="GO" id="GO:0140662">
    <property type="term" value="F:ATP-dependent protein folding chaperone"/>
    <property type="evidence" value="ECO:0007669"/>
    <property type="project" value="InterPro"/>
</dbReference>
<dbReference type="GO" id="GO:0016853">
    <property type="term" value="F:isomerase activity"/>
    <property type="evidence" value="ECO:0007669"/>
    <property type="project" value="UniProtKB-KW"/>
</dbReference>
<dbReference type="GO" id="GO:0051082">
    <property type="term" value="F:unfolded protein binding"/>
    <property type="evidence" value="ECO:0007669"/>
    <property type="project" value="UniProtKB-UniRule"/>
</dbReference>
<dbReference type="GO" id="GO:0042026">
    <property type="term" value="P:protein refolding"/>
    <property type="evidence" value="ECO:0007669"/>
    <property type="project" value="UniProtKB-UniRule"/>
</dbReference>
<dbReference type="CDD" id="cd03344">
    <property type="entry name" value="GroEL"/>
    <property type="match status" value="1"/>
</dbReference>
<dbReference type="FunFam" id="1.10.560.10:FF:000001">
    <property type="entry name" value="60 kDa chaperonin"/>
    <property type="match status" value="1"/>
</dbReference>
<dbReference type="FunFam" id="3.50.7.10:FF:000001">
    <property type="entry name" value="60 kDa chaperonin"/>
    <property type="match status" value="1"/>
</dbReference>
<dbReference type="Gene3D" id="3.50.7.10">
    <property type="entry name" value="GroEL"/>
    <property type="match status" value="1"/>
</dbReference>
<dbReference type="Gene3D" id="1.10.560.10">
    <property type="entry name" value="GroEL-like equatorial domain"/>
    <property type="match status" value="1"/>
</dbReference>
<dbReference type="Gene3D" id="3.30.260.10">
    <property type="entry name" value="TCP-1-like chaperonin intermediate domain"/>
    <property type="match status" value="1"/>
</dbReference>
<dbReference type="HAMAP" id="MF_00600">
    <property type="entry name" value="CH60"/>
    <property type="match status" value="1"/>
</dbReference>
<dbReference type="InterPro" id="IPR018370">
    <property type="entry name" value="Chaperonin_Cpn60_CS"/>
</dbReference>
<dbReference type="InterPro" id="IPR001844">
    <property type="entry name" value="Cpn60/GroEL"/>
</dbReference>
<dbReference type="InterPro" id="IPR002423">
    <property type="entry name" value="Cpn60/GroEL/TCP-1"/>
</dbReference>
<dbReference type="InterPro" id="IPR027409">
    <property type="entry name" value="GroEL-like_apical_dom_sf"/>
</dbReference>
<dbReference type="InterPro" id="IPR027413">
    <property type="entry name" value="GROEL-like_equatorial_sf"/>
</dbReference>
<dbReference type="InterPro" id="IPR027410">
    <property type="entry name" value="TCP-1-like_intermed_sf"/>
</dbReference>
<dbReference type="NCBIfam" id="TIGR02348">
    <property type="entry name" value="GroEL"/>
    <property type="match status" value="1"/>
</dbReference>
<dbReference type="NCBIfam" id="NF000592">
    <property type="entry name" value="PRK00013.1"/>
    <property type="match status" value="1"/>
</dbReference>
<dbReference type="NCBIfam" id="NF009487">
    <property type="entry name" value="PRK12849.1"/>
    <property type="match status" value="1"/>
</dbReference>
<dbReference type="NCBIfam" id="NF009488">
    <property type="entry name" value="PRK12850.1"/>
    <property type="match status" value="1"/>
</dbReference>
<dbReference type="NCBIfam" id="NF009489">
    <property type="entry name" value="PRK12851.1"/>
    <property type="match status" value="1"/>
</dbReference>
<dbReference type="PANTHER" id="PTHR45633">
    <property type="entry name" value="60 KDA HEAT SHOCK PROTEIN, MITOCHONDRIAL"/>
    <property type="match status" value="1"/>
</dbReference>
<dbReference type="Pfam" id="PF00118">
    <property type="entry name" value="Cpn60_TCP1"/>
    <property type="match status" value="1"/>
</dbReference>
<dbReference type="PRINTS" id="PR00298">
    <property type="entry name" value="CHAPERONIN60"/>
</dbReference>
<dbReference type="SUPFAM" id="SSF52029">
    <property type="entry name" value="GroEL apical domain-like"/>
    <property type="match status" value="1"/>
</dbReference>
<dbReference type="SUPFAM" id="SSF48592">
    <property type="entry name" value="GroEL equatorial domain-like"/>
    <property type="match status" value="1"/>
</dbReference>
<dbReference type="SUPFAM" id="SSF54849">
    <property type="entry name" value="GroEL-intermediate domain like"/>
    <property type="match status" value="1"/>
</dbReference>
<dbReference type="PROSITE" id="PS00296">
    <property type="entry name" value="CHAPERONINS_CPN60"/>
    <property type="match status" value="1"/>
</dbReference>
<comment type="function">
    <text evidence="1">Together with its co-chaperonin GroES, plays an essential role in assisting protein folding. The GroEL-GroES system forms a nano-cage that allows encapsulation of the non-native substrate proteins and provides a physical environment optimized to promote and accelerate protein folding.</text>
</comment>
<comment type="catalytic activity">
    <reaction evidence="1">
        <text>ATP + H2O + a folded polypeptide = ADP + phosphate + an unfolded polypeptide.</text>
        <dbReference type="EC" id="5.6.1.7"/>
    </reaction>
</comment>
<comment type="subunit">
    <text evidence="1">Forms a cylinder of 14 subunits composed of two heptameric rings stacked back-to-back. Interacts with the co-chaperonin GroES.</text>
</comment>
<comment type="subcellular location">
    <subcellularLocation>
        <location evidence="1">Cytoplasm</location>
    </subcellularLocation>
</comment>
<comment type="similarity">
    <text evidence="1">Belongs to the chaperonin (HSP60) family.</text>
</comment>
<accession>A7ZV12</accession>
<organism>
    <name type="scientific">Escherichia coli O139:H28 (strain E24377A / ETEC)</name>
    <dbReference type="NCBI Taxonomy" id="331111"/>
    <lineage>
        <taxon>Bacteria</taxon>
        <taxon>Pseudomonadati</taxon>
        <taxon>Pseudomonadota</taxon>
        <taxon>Gammaproteobacteria</taxon>
        <taxon>Enterobacterales</taxon>
        <taxon>Enterobacteriaceae</taxon>
        <taxon>Escherichia</taxon>
    </lineage>
</organism>
<gene>
    <name evidence="1" type="primary">groEL</name>
    <name evidence="1" type="synonym">groL</name>
    <name type="ordered locus">EcE24377A_4698</name>
</gene>
<keyword id="KW-0067">ATP-binding</keyword>
<keyword id="KW-0143">Chaperone</keyword>
<keyword id="KW-0963">Cytoplasm</keyword>
<keyword id="KW-0413">Isomerase</keyword>
<keyword id="KW-0547">Nucleotide-binding</keyword>
<keyword id="KW-1185">Reference proteome</keyword>
<evidence type="ECO:0000255" key="1">
    <source>
        <dbReference type="HAMAP-Rule" id="MF_00600"/>
    </source>
</evidence>
<proteinExistence type="inferred from homology"/>
<protein>
    <recommendedName>
        <fullName evidence="1">Chaperonin GroEL</fullName>
        <ecNumber evidence="1">5.6.1.7</ecNumber>
    </recommendedName>
    <alternativeName>
        <fullName evidence="1">60 kDa chaperonin</fullName>
    </alternativeName>
    <alternativeName>
        <fullName evidence="1">Chaperonin-60</fullName>
        <shortName evidence="1">Cpn60</shortName>
    </alternativeName>
</protein>
<name>CH60_ECO24</name>
<feature type="chain" id="PRO_1000061254" description="Chaperonin GroEL">
    <location>
        <begin position="1"/>
        <end position="548"/>
    </location>
</feature>
<feature type="binding site" evidence="1">
    <location>
        <begin position="30"/>
        <end position="33"/>
    </location>
    <ligand>
        <name>ATP</name>
        <dbReference type="ChEBI" id="CHEBI:30616"/>
    </ligand>
</feature>
<feature type="binding site" evidence="1">
    <location>
        <position position="51"/>
    </location>
    <ligand>
        <name>ATP</name>
        <dbReference type="ChEBI" id="CHEBI:30616"/>
    </ligand>
</feature>
<feature type="binding site" evidence="1">
    <location>
        <begin position="87"/>
        <end position="91"/>
    </location>
    <ligand>
        <name>ATP</name>
        <dbReference type="ChEBI" id="CHEBI:30616"/>
    </ligand>
</feature>
<feature type="binding site" evidence="1">
    <location>
        <position position="415"/>
    </location>
    <ligand>
        <name>ATP</name>
        <dbReference type="ChEBI" id="CHEBI:30616"/>
    </ligand>
</feature>
<feature type="binding site" evidence="1">
    <location>
        <begin position="479"/>
        <end position="481"/>
    </location>
    <ligand>
        <name>ATP</name>
        <dbReference type="ChEBI" id="CHEBI:30616"/>
    </ligand>
</feature>
<feature type="binding site" evidence="1">
    <location>
        <position position="495"/>
    </location>
    <ligand>
        <name>ATP</name>
        <dbReference type="ChEBI" id="CHEBI:30616"/>
    </ligand>
</feature>